<feature type="chain" id="PRO_1000123481" description="Lipoprotein signal peptidase">
    <location>
        <begin position="1"/>
        <end position="150"/>
    </location>
</feature>
<feature type="transmembrane region" description="Helical" evidence="1">
    <location>
        <begin position="58"/>
        <end position="78"/>
    </location>
</feature>
<feature type="transmembrane region" description="Helical" evidence="1">
    <location>
        <begin position="85"/>
        <end position="107"/>
    </location>
</feature>
<feature type="transmembrane region" description="Helical" evidence="1">
    <location>
        <begin position="117"/>
        <end position="137"/>
    </location>
</feature>
<feature type="active site" evidence="1">
    <location>
        <position position="108"/>
    </location>
</feature>
<feature type="active site" evidence="1">
    <location>
        <position position="122"/>
    </location>
</feature>
<name>LSPA_CALBD</name>
<reference key="1">
    <citation type="submission" date="2009-01" db="EMBL/GenBank/DDBJ databases">
        <title>Complete sequence of chromosome of Caldicellulosiruptor becscii DSM 6725.</title>
        <authorList>
            <person name="Lucas S."/>
            <person name="Copeland A."/>
            <person name="Lapidus A."/>
            <person name="Glavina del Rio T."/>
            <person name="Tice H."/>
            <person name="Bruce D."/>
            <person name="Goodwin L."/>
            <person name="Pitluck S."/>
            <person name="Sims D."/>
            <person name="Meincke L."/>
            <person name="Brettin T."/>
            <person name="Detter J.C."/>
            <person name="Han C."/>
            <person name="Larimer F."/>
            <person name="Land M."/>
            <person name="Hauser L."/>
            <person name="Kyrpides N."/>
            <person name="Ovchinnikova G."/>
            <person name="Kataeva I."/>
            <person name="Adams M.W.W."/>
        </authorList>
    </citation>
    <scope>NUCLEOTIDE SEQUENCE [LARGE SCALE GENOMIC DNA]</scope>
    <source>
        <strain>ATCC BAA-1888 / DSM 6725 / KCTC 15123 / Z-1320</strain>
    </source>
</reference>
<evidence type="ECO:0000255" key="1">
    <source>
        <dbReference type="HAMAP-Rule" id="MF_00161"/>
    </source>
</evidence>
<comment type="function">
    <text evidence="1">This protein specifically catalyzes the removal of signal peptides from prolipoproteins.</text>
</comment>
<comment type="catalytic activity">
    <reaction evidence="1">
        <text>Release of signal peptides from bacterial membrane prolipoproteins. Hydrolyzes -Xaa-Yaa-Zaa-|-(S,diacylglyceryl)Cys-, in which Xaa is hydrophobic (preferably Leu), and Yaa (Ala or Ser) and Zaa (Gly or Ala) have small, neutral side chains.</text>
        <dbReference type="EC" id="3.4.23.36"/>
    </reaction>
</comment>
<comment type="pathway">
    <text evidence="1">Protein modification; lipoprotein biosynthesis (signal peptide cleavage).</text>
</comment>
<comment type="subcellular location">
    <subcellularLocation>
        <location evidence="1">Cell membrane</location>
        <topology evidence="1">Multi-pass membrane protein</topology>
    </subcellularLocation>
</comment>
<comment type="similarity">
    <text evidence="1">Belongs to the peptidase A8 family.</text>
</comment>
<proteinExistence type="inferred from homology"/>
<sequence>MVYWIIIMSTFVLDQLTKARAEKFFVDSPVNLLGGILSLTYVQNRGGAFSILEGKRRFFIIVSIILILFLCYMIFKSTSNLYKFSFSLIVGGAIGNLFDRIVKGYVVDFIDIKVIPVFNLADFFITGGVLLLTFLILKEGGEELFLKKKP</sequence>
<accession>B9MS17</accession>
<organism>
    <name type="scientific">Caldicellulosiruptor bescii (strain ATCC BAA-1888 / DSM 6725 / KCTC 15123 / Z-1320)</name>
    <name type="common">Anaerocellum thermophilum</name>
    <dbReference type="NCBI Taxonomy" id="521460"/>
    <lineage>
        <taxon>Bacteria</taxon>
        <taxon>Bacillati</taxon>
        <taxon>Bacillota</taxon>
        <taxon>Bacillota incertae sedis</taxon>
        <taxon>Caldicellulosiruptorales</taxon>
        <taxon>Caldicellulosiruptoraceae</taxon>
        <taxon>Caldicellulosiruptor</taxon>
    </lineage>
</organism>
<protein>
    <recommendedName>
        <fullName evidence="1">Lipoprotein signal peptidase</fullName>
        <ecNumber evidence="1">3.4.23.36</ecNumber>
    </recommendedName>
    <alternativeName>
        <fullName evidence="1">Prolipoprotein signal peptidase</fullName>
    </alternativeName>
    <alternativeName>
        <fullName evidence="1">Signal peptidase II</fullName>
        <shortName evidence="1">SPase II</shortName>
    </alternativeName>
</protein>
<dbReference type="EC" id="3.4.23.36" evidence="1"/>
<dbReference type="EMBL" id="CP001393">
    <property type="protein sequence ID" value="ACM60471.1"/>
    <property type="molecule type" value="Genomic_DNA"/>
</dbReference>
<dbReference type="RefSeq" id="WP_015907840.1">
    <property type="nucleotide sequence ID" value="NC_012034.1"/>
</dbReference>
<dbReference type="SMR" id="B9MS17"/>
<dbReference type="STRING" id="521460.Athe_1371"/>
<dbReference type="GeneID" id="31772718"/>
<dbReference type="KEGG" id="ate:Athe_1371"/>
<dbReference type="eggNOG" id="COG0597">
    <property type="taxonomic scope" value="Bacteria"/>
</dbReference>
<dbReference type="HOGENOM" id="CLU_083252_3_1_9"/>
<dbReference type="UniPathway" id="UPA00665"/>
<dbReference type="Proteomes" id="UP000007723">
    <property type="component" value="Chromosome"/>
</dbReference>
<dbReference type="GO" id="GO:0005886">
    <property type="term" value="C:plasma membrane"/>
    <property type="evidence" value="ECO:0007669"/>
    <property type="project" value="UniProtKB-SubCell"/>
</dbReference>
<dbReference type="GO" id="GO:0004190">
    <property type="term" value="F:aspartic-type endopeptidase activity"/>
    <property type="evidence" value="ECO:0007669"/>
    <property type="project" value="UniProtKB-UniRule"/>
</dbReference>
<dbReference type="GO" id="GO:0006508">
    <property type="term" value="P:proteolysis"/>
    <property type="evidence" value="ECO:0007669"/>
    <property type="project" value="UniProtKB-KW"/>
</dbReference>
<dbReference type="HAMAP" id="MF_00161">
    <property type="entry name" value="LspA"/>
    <property type="match status" value="1"/>
</dbReference>
<dbReference type="InterPro" id="IPR001872">
    <property type="entry name" value="Peptidase_A8"/>
</dbReference>
<dbReference type="NCBIfam" id="TIGR00077">
    <property type="entry name" value="lspA"/>
    <property type="match status" value="1"/>
</dbReference>
<dbReference type="PANTHER" id="PTHR33695">
    <property type="entry name" value="LIPOPROTEIN SIGNAL PEPTIDASE"/>
    <property type="match status" value="1"/>
</dbReference>
<dbReference type="PANTHER" id="PTHR33695:SF1">
    <property type="entry name" value="LIPOPROTEIN SIGNAL PEPTIDASE"/>
    <property type="match status" value="1"/>
</dbReference>
<dbReference type="Pfam" id="PF01252">
    <property type="entry name" value="Peptidase_A8"/>
    <property type="match status" value="1"/>
</dbReference>
<dbReference type="PRINTS" id="PR00781">
    <property type="entry name" value="LIPOSIGPTASE"/>
</dbReference>
<dbReference type="PROSITE" id="PS00855">
    <property type="entry name" value="SPASE_II"/>
    <property type="match status" value="1"/>
</dbReference>
<keyword id="KW-0064">Aspartyl protease</keyword>
<keyword id="KW-1003">Cell membrane</keyword>
<keyword id="KW-0378">Hydrolase</keyword>
<keyword id="KW-0472">Membrane</keyword>
<keyword id="KW-0645">Protease</keyword>
<keyword id="KW-0812">Transmembrane</keyword>
<keyword id="KW-1133">Transmembrane helix</keyword>
<gene>
    <name evidence="1" type="primary">lspA</name>
    <name type="ordered locus">Athe_1371</name>
</gene>